<accession>A9KS12</accession>
<feature type="chain" id="PRO_1000087313" description="Protein translocase subunit SecA">
    <location>
        <begin position="1"/>
        <end position="858"/>
    </location>
</feature>
<feature type="binding site" evidence="1">
    <location>
        <position position="85"/>
    </location>
    <ligand>
        <name>ATP</name>
        <dbReference type="ChEBI" id="CHEBI:30616"/>
    </ligand>
</feature>
<feature type="binding site" evidence="1">
    <location>
        <begin position="103"/>
        <end position="107"/>
    </location>
    <ligand>
        <name>ATP</name>
        <dbReference type="ChEBI" id="CHEBI:30616"/>
    </ligand>
</feature>
<feature type="binding site" evidence="1">
    <location>
        <position position="511"/>
    </location>
    <ligand>
        <name>ATP</name>
        <dbReference type="ChEBI" id="CHEBI:30616"/>
    </ligand>
</feature>
<feature type="binding site" evidence="1">
    <location>
        <position position="840"/>
    </location>
    <ligand>
        <name>Zn(2+)</name>
        <dbReference type="ChEBI" id="CHEBI:29105"/>
    </ligand>
</feature>
<feature type="binding site" evidence="1">
    <location>
        <position position="842"/>
    </location>
    <ligand>
        <name>Zn(2+)</name>
        <dbReference type="ChEBI" id="CHEBI:29105"/>
    </ligand>
</feature>
<feature type="binding site" evidence="1">
    <location>
        <position position="851"/>
    </location>
    <ligand>
        <name>Zn(2+)</name>
        <dbReference type="ChEBI" id="CHEBI:29105"/>
    </ligand>
</feature>
<feature type="binding site" evidence="1">
    <location>
        <position position="852"/>
    </location>
    <ligand>
        <name>Zn(2+)</name>
        <dbReference type="ChEBI" id="CHEBI:29105"/>
    </ligand>
</feature>
<dbReference type="EC" id="7.4.2.8" evidence="1"/>
<dbReference type="EMBL" id="CP000885">
    <property type="protein sequence ID" value="ABX40643.1"/>
    <property type="molecule type" value="Genomic_DNA"/>
</dbReference>
<dbReference type="RefSeq" id="WP_012198286.1">
    <property type="nucleotide sequence ID" value="NC_010001.1"/>
</dbReference>
<dbReference type="SMR" id="A9KS12"/>
<dbReference type="STRING" id="357809.Cphy_0256"/>
<dbReference type="KEGG" id="cpy:Cphy_0256"/>
<dbReference type="eggNOG" id="COG0653">
    <property type="taxonomic scope" value="Bacteria"/>
</dbReference>
<dbReference type="HOGENOM" id="CLU_005314_3_0_9"/>
<dbReference type="OrthoDB" id="9805579at2"/>
<dbReference type="Proteomes" id="UP000000370">
    <property type="component" value="Chromosome"/>
</dbReference>
<dbReference type="GO" id="GO:0031522">
    <property type="term" value="C:cell envelope Sec protein transport complex"/>
    <property type="evidence" value="ECO:0007669"/>
    <property type="project" value="TreeGrafter"/>
</dbReference>
<dbReference type="GO" id="GO:0005829">
    <property type="term" value="C:cytosol"/>
    <property type="evidence" value="ECO:0007669"/>
    <property type="project" value="TreeGrafter"/>
</dbReference>
<dbReference type="GO" id="GO:0005886">
    <property type="term" value="C:plasma membrane"/>
    <property type="evidence" value="ECO:0007669"/>
    <property type="project" value="UniProtKB-SubCell"/>
</dbReference>
<dbReference type="GO" id="GO:0005524">
    <property type="term" value="F:ATP binding"/>
    <property type="evidence" value="ECO:0007669"/>
    <property type="project" value="UniProtKB-UniRule"/>
</dbReference>
<dbReference type="GO" id="GO:0046872">
    <property type="term" value="F:metal ion binding"/>
    <property type="evidence" value="ECO:0007669"/>
    <property type="project" value="UniProtKB-KW"/>
</dbReference>
<dbReference type="GO" id="GO:0008564">
    <property type="term" value="F:protein-exporting ATPase activity"/>
    <property type="evidence" value="ECO:0007669"/>
    <property type="project" value="UniProtKB-EC"/>
</dbReference>
<dbReference type="GO" id="GO:0065002">
    <property type="term" value="P:intracellular protein transmembrane transport"/>
    <property type="evidence" value="ECO:0007669"/>
    <property type="project" value="UniProtKB-UniRule"/>
</dbReference>
<dbReference type="GO" id="GO:0017038">
    <property type="term" value="P:protein import"/>
    <property type="evidence" value="ECO:0007669"/>
    <property type="project" value="InterPro"/>
</dbReference>
<dbReference type="GO" id="GO:0006605">
    <property type="term" value="P:protein targeting"/>
    <property type="evidence" value="ECO:0007669"/>
    <property type="project" value="UniProtKB-UniRule"/>
</dbReference>
<dbReference type="GO" id="GO:0043952">
    <property type="term" value="P:protein transport by the Sec complex"/>
    <property type="evidence" value="ECO:0007669"/>
    <property type="project" value="TreeGrafter"/>
</dbReference>
<dbReference type="CDD" id="cd17928">
    <property type="entry name" value="DEXDc_SecA"/>
    <property type="match status" value="1"/>
</dbReference>
<dbReference type="CDD" id="cd18803">
    <property type="entry name" value="SF2_C_secA"/>
    <property type="match status" value="1"/>
</dbReference>
<dbReference type="FunFam" id="3.40.50.300:FF:000429">
    <property type="entry name" value="Preprotein translocase subunit SecA"/>
    <property type="match status" value="1"/>
</dbReference>
<dbReference type="FunFam" id="3.90.1440.10:FF:000001">
    <property type="entry name" value="Preprotein translocase subunit SecA"/>
    <property type="match status" value="1"/>
</dbReference>
<dbReference type="FunFam" id="1.10.3060.10:FF:000003">
    <property type="entry name" value="Protein translocase subunit SecA"/>
    <property type="match status" value="1"/>
</dbReference>
<dbReference type="FunFam" id="3.40.50.300:FF:000334">
    <property type="entry name" value="Protein translocase subunit SecA"/>
    <property type="match status" value="1"/>
</dbReference>
<dbReference type="Gene3D" id="1.10.3060.10">
    <property type="entry name" value="Helical scaffold and wing domains of SecA"/>
    <property type="match status" value="1"/>
</dbReference>
<dbReference type="Gene3D" id="3.40.50.300">
    <property type="entry name" value="P-loop containing nucleotide triphosphate hydrolases"/>
    <property type="match status" value="2"/>
</dbReference>
<dbReference type="Gene3D" id="3.90.1440.10">
    <property type="entry name" value="SecA, preprotein cross-linking domain"/>
    <property type="match status" value="1"/>
</dbReference>
<dbReference type="HAMAP" id="MF_01382">
    <property type="entry name" value="SecA"/>
    <property type="match status" value="1"/>
</dbReference>
<dbReference type="InterPro" id="IPR014001">
    <property type="entry name" value="Helicase_ATP-bd"/>
</dbReference>
<dbReference type="InterPro" id="IPR001650">
    <property type="entry name" value="Helicase_C-like"/>
</dbReference>
<dbReference type="InterPro" id="IPR027417">
    <property type="entry name" value="P-loop_NTPase"/>
</dbReference>
<dbReference type="InterPro" id="IPR004027">
    <property type="entry name" value="SEC_C_motif"/>
</dbReference>
<dbReference type="InterPro" id="IPR000185">
    <property type="entry name" value="SecA"/>
</dbReference>
<dbReference type="InterPro" id="IPR020937">
    <property type="entry name" value="SecA_CS"/>
</dbReference>
<dbReference type="InterPro" id="IPR011115">
    <property type="entry name" value="SecA_DEAD"/>
</dbReference>
<dbReference type="InterPro" id="IPR014018">
    <property type="entry name" value="SecA_motor_DEAD"/>
</dbReference>
<dbReference type="InterPro" id="IPR011130">
    <property type="entry name" value="SecA_preprotein_X-link_dom"/>
</dbReference>
<dbReference type="InterPro" id="IPR044722">
    <property type="entry name" value="SecA_SF2_C"/>
</dbReference>
<dbReference type="InterPro" id="IPR011116">
    <property type="entry name" value="SecA_Wing/Scaffold"/>
</dbReference>
<dbReference type="InterPro" id="IPR036266">
    <property type="entry name" value="SecA_Wing/Scaffold_sf"/>
</dbReference>
<dbReference type="InterPro" id="IPR036670">
    <property type="entry name" value="SecA_X-link_sf"/>
</dbReference>
<dbReference type="NCBIfam" id="NF006630">
    <property type="entry name" value="PRK09200.1"/>
    <property type="match status" value="1"/>
</dbReference>
<dbReference type="NCBIfam" id="NF009538">
    <property type="entry name" value="PRK12904.1"/>
    <property type="match status" value="1"/>
</dbReference>
<dbReference type="NCBIfam" id="TIGR00963">
    <property type="entry name" value="secA"/>
    <property type="match status" value="1"/>
</dbReference>
<dbReference type="PANTHER" id="PTHR30612:SF0">
    <property type="entry name" value="CHLOROPLAST PROTEIN-TRANSPORTING ATPASE"/>
    <property type="match status" value="1"/>
</dbReference>
<dbReference type="PANTHER" id="PTHR30612">
    <property type="entry name" value="SECA INNER MEMBRANE COMPONENT OF SEC PROTEIN SECRETION SYSTEM"/>
    <property type="match status" value="1"/>
</dbReference>
<dbReference type="Pfam" id="PF21090">
    <property type="entry name" value="P-loop_SecA"/>
    <property type="match status" value="2"/>
</dbReference>
<dbReference type="Pfam" id="PF02810">
    <property type="entry name" value="SEC-C"/>
    <property type="match status" value="1"/>
</dbReference>
<dbReference type="Pfam" id="PF07517">
    <property type="entry name" value="SecA_DEAD"/>
    <property type="match status" value="1"/>
</dbReference>
<dbReference type="Pfam" id="PF01043">
    <property type="entry name" value="SecA_PP_bind"/>
    <property type="match status" value="1"/>
</dbReference>
<dbReference type="Pfam" id="PF07516">
    <property type="entry name" value="SecA_SW"/>
    <property type="match status" value="1"/>
</dbReference>
<dbReference type="PRINTS" id="PR00906">
    <property type="entry name" value="SECA"/>
</dbReference>
<dbReference type="SMART" id="SM00957">
    <property type="entry name" value="SecA_DEAD"/>
    <property type="match status" value="1"/>
</dbReference>
<dbReference type="SMART" id="SM00958">
    <property type="entry name" value="SecA_PP_bind"/>
    <property type="match status" value="1"/>
</dbReference>
<dbReference type="SUPFAM" id="SSF81886">
    <property type="entry name" value="Helical scaffold and wing domains of SecA"/>
    <property type="match status" value="1"/>
</dbReference>
<dbReference type="SUPFAM" id="SSF52540">
    <property type="entry name" value="P-loop containing nucleoside triphosphate hydrolases"/>
    <property type="match status" value="2"/>
</dbReference>
<dbReference type="SUPFAM" id="SSF81767">
    <property type="entry name" value="Pre-protein crosslinking domain of SecA"/>
    <property type="match status" value="1"/>
</dbReference>
<dbReference type="PROSITE" id="PS01312">
    <property type="entry name" value="SECA"/>
    <property type="match status" value="1"/>
</dbReference>
<dbReference type="PROSITE" id="PS51196">
    <property type="entry name" value="SECA_MOTOR_DEAD"/>
    <property type="match status" value="1"/>
</dbReference>
<organism>
    <name type="scientific">Lachnoclostridium phytofermentans (strain ATCC 700394 / DSM 18823 / ISDg)</name>
    <name type="common">Clostridium phytofermentans</name>
    <dbReference type="NCBI Taxonomy" id="357809"/>
    <lineage>
        <taxon>Bacteria</taxon>
        <taxon>Bacillati</taxon>
        <taxon>Bacillota</taxon>
        <taxon>Clostridia</taxon>
        <taxon>Lachnospirales</taxon>
        <taxon>Lachnospiraceae</taxon>
    </lineage>
</organism>
<keyword id="KW-0067">ATP-binding</keyword>
<keyword id="KW-1003">Cell membrane</keyword>
<keyword id="KW-0963">Cytoplasm</keyword>
<keyword id="KW-0472">Membrane</keyword>
<keyword id="KW-0479">Metal-binding</keyword>
<keyword id="KW-0547">Nucleotide-binding</keyword>
<keyword id="KW-0653">Protein transport</keyword>
<keyword id="KW-1185">Reference proteome</keyword>
<keyword id="KW-1278">Translocase</keyword>
<keyword id="KW-0811">Translocation</keyword>
<keyword id="KW-0813">Transport</keyword>
<keyword id="KW-0862">Zinc</keyword>
<sequence length="858" mass="97686">MGLIKKIFGTHSEREIKLIRPTADKIEALEPDMMKLSDDELRGKTIEFKNRLKNGETLDDILVEAYAVVREAAKRTLGNRAYYVQLLGGIILHQGRISEMRTGEGKTLTSTFPAYLNALEGEGVHIVTVNDYLAKRDAEWMGEVHRFLGLSVGCILNDMDNDERRKAYNCDITYATNNELGFDYLRDNMVIYKEQLVMRDLHFAIIDEVDSVLIDEARTPLIISGQSGKSTRLYEACDILARQLTKGTAKELSKMDIIMKEDDQETGDFVVNEKEKAVNLTAEGVEKVERFFKIENLADPENLEIQHNIILALRAHYLMAIDKDYVVKDDEVLIVDDFTGRIMPGRRYSDGLHQAIEAKEHVKVKRESKTLATITFQNFFNKYTKKCGMTGTALTEENEFREIYGMDVVEVPTNRPVARIDKDDAVYRTKREKLNAVINAIVEAHKAGQPVLVGTITIEASEEISELLKKKNIPHKVLNAKFHELEAEIIADAGQKGAVTIATNMAGRGTDIKLGEGVTELGGLKIIGTERHESRRIDNQLRGRSGRQGDPGESCFYICLEDDLMRLFGSERLNTIFKSLGLPEGEQIEHKMLSGAIEKAQKKIEDNNFGIRKNLLEYDKVNNEQREIIYAERRKVLNGDSMRDVIFKMITDNVETCVNTSISDDQLPEEWDLAELNQMLLPIIPMEPVELKDNELRHMKRNELIHMLKEKAVKLYEEKEAEFPEKEHLREVERVVLLRVIDRKWMDHIDDMDQLRQGIGLQAYGQRDPKTEYKFSGFEMFDTMINAITEDTVKALMHVRIEQKVEREEVAKVTGTNRDESVAKAPVKRATKKVQPNDPCPCGSGKKYKHCCGGVGRI</sequence>
<proteinExistence type="inferred from homology"/>
<evidence type="ECO:0000255" key="1">
    <source>
        <dbReference type="HAMAP-Rule" id="MF_01382"/>
    </source>
</evidence>
<protein>
    <recommendedName>
        <fullName evidence="1">Protein translocase subunit SecA</fullName>
        <ecNumber evidence="1">7.4.2.8</ecNumber>
    </recommendedName>
</protein>
<comment type="function">
    <text evidence="1">Part of the Sec protein translocase complex. Interacts with the SecYEG preprotein conducting channel. Has a central role in coupling the hydrolysis of ATP to the transfer of proteins into and across the cell membrane, serving as an ATP-driven molecular motor driving the stepwise translocation of polypeptide chains across the membrane.</text>
</comment>
<comment type="catalytic activity">
    <reaction evidence="1">
        <text>ATP + H2O + cellular proteinSide 1 = ADP + phosphate + cellular proteinSide 2.</text>
        <dbReference type="EC" id="7.4.2.8"/>
    </reaction>
</comment>
<comment type="cofactor">
    <cofactor evidence="1">
        <name>Zn(2+)</name>
        <dbReference type="ChEBI" id="CHEBI:29105"/>
    </cofactor>
    <text evidence="1">May bind 1 zinc ion per subunit.</text>
</comment>
<comment type="subunit">
    <text evidence="1">Monomer and homodimer. Part of the essential Sec protein translocation apparatus which comprises SecA, SecYEG and auxiliary proteins SecDF. Other proteins may also be involved.</text>
</comment>
<comment type="subcellular location">
    <subcellularLocation>
        <location evidence="1">Cell membrane</location>
        <topology evidence="1">Peripheral membrane protein</topology>
        <orientation evidence="1">Cytoplasmic side</orientation>
    </subcellularLocation>
    <subcellularLocation>
        <location evidence="1">Cytoplasm</location>
    </subcellularLocation>
    <text evidence="1">Distribution is 50-50.</text>
</comment>
<comment type="similarity">
    <text evidence="1">Belongs to the SecA family.</text>
</comment>
<name>SECA_LACP7</name>
<reference key="1">
    <citation type="submission" date="2007-11" db="EMBL/GenBank/DDBJ databases">
        <title>Complete genome sequence of Clostridium phytofermentans ISDg.</title>
        <authorList>
            <person name="Leschine S.B."/>
            <person name="Warnick T.A."/>
            <person name="Blanchard J.L."/>
            <person name="Schnell D.J."/>
            <person name="Petit E.L."/>
            <person name="LaTouf W.G."/>
            <person name="Copeland A."/>
            <person name="Lucas S."/>
            <person name="Lapidus A."/>
            <person name="Barry K."/>
            <person name="Glavina del Rio T."/>
            <person name="Dalin E."/>
            <person name="Tice H."/>
            <person name="Pitluck S."/>
            <person name="Kiss H."/>
            <person name="Brettin T."/>
            <person name="Bruce D."/>
            <person name="Detter J.C."/>
            <person name="Han C."/>
            <person name="Kuske C."/>
            <person name="Schmutz J."/>
            <person name="Larimer F."/>
            <person name="Land M."/>
            <person name="Hauser L."/>
            <person name="Kyrpides N."/>
            <person name="Kim E.A."/>
            <person name="Richardson P."/>
        </authorList>
    </citation>
    <scope>NUCLEOTIDE SEQUENCE [LARGE SCALE GENOMIC DNA]</scope>
    <source>
        <strain>ATCC 700394 / DSM 18823 / ISDg</strain>
    </source>
</reference>
<gene>
    <name evidence="1" type="primary">secA</name>
    <name type="ordered locus">Cphy_0256</name>
</gene>